<comment type="function">
    <text evidence="1">Required to facilitate the formation of correct disulfide bonds in some periplasmic proteins and for the assembly of the periplasmic c-type cytochromes. Acts by transferring electrons from cytoplasmic thioredoxin to the periplasm. This transfer involves a cascade of disulfide bond formation and reduction steps.</text>
</comment>
<comment type="catalytic activity">
    <reaction evidence="1">
        <text>[protein]-dithiol + NAD(+) = [protein]-disulfide + NADH + H(+)</text>
        <dbReference type="Rhea" id="RHEA:18749"/>
        <dbReference type="Rhea" id="RHEA-COMP:10593"/>
        <dbReference type="Rhea" id="RHEA-COMP:10594"/>
        <dbReference type="ChEBI" id="CHEBI:15378"/>
        <dbReference type="ChEBI" id="CHEBI:29950"/>
        <dbReference type="ChEBI" id="CHEBI:50058"/>
        <dbReference type="ChEBI" id="CHEBI:57540"/>
        <dbReference type="ChEBI" id="CHEBI:57945"/>
        <dbReference type="EC" id="1.8.1.8"/>
    </reaction>
</comment>
<comment type="catalytic activity">
    <reaction evidence="1">
        <text>[protein]-dithiol + NADP(+) = [protein]-disulfide + NADPH + H(+)</text>
        <dbReference type="Rhea" id="RHEA:18753"/>
        <dbReference type="Rhea" id="RHEA-COMP:10593"/>
        <dbReference type="Rhea" id="RHEA-COMP:10594"/>
        <dbReference type="ChEBI" id="CHEBI:15378"/>
        <dbReference type="ChEBI" id="CHEBI:29950"/>
        <dbReference type="ChEBI" id="CHEBI:50058"/>
        <dbReference type="ChEBI" id="CHEBI:57783"/>
        <dbReference type="ChEBI" id="CHEBI:58349"/>
        <dbReference type="EC" id="1.8.1.8"/>
    </reaction>
</comment>
<comment type="subcellular location">
    <subcellularLocation>
        <location evidence="1">Cell inner membrane</location>
        <topology evidence="1">Multi-pass membrane protein</topology>
    </subcellularLocation>
</comment>
<comment type="similarity">
    <text evidence="1">Belongs to the thioredoxin family. DsbD subfamily.</text>
</comment>
<reference key="1">
    <citation type="journal article" date="2005" name="Nucleic Acids Res.">
        <title>The genome sequence of Salmonella enterica serovar Choleraesuis, a highly invasive and resistant zoonotic pathogen.</title>
        <authorList>
            <person name="Chiu C.-H."/>
            <person name="Tang P."/>
            <person name="Chu C."/>
            <person name="Hu S."/>
            <person name="Bao Q."/>
            <person name="Yu J."/>
            <person name="Chou Y.-Y."/>
            <person name="Wang H.-S."/>
            <person name="Lee Y.-S."/>
        </authorList>
    </citation>
    <scope>NUCLEOTIDE SEQUENCE [LARGE SCALE GENOMIC DNA]</scope>
    <source>
        <strain>SC-B67</strain>
    </source>
</reference>
<evidence type="ECO:0000255" key="1">
    <source>
        <dbReference type="HAMAP-Rule" id="MF_00399"/>
    </source>
</evidence>
<dbReference type="EC" id="1.8.1.8" evidence="1"/>
<dbReference type="EMBL" id="AE017220">
    <property type="protein sequence ID" value="AAX68107.1"/>
    <property type="molecule type" value="Genomic_DNA"/>
</dbReference>
<dbReference type="RefSeq" id="WP_011264458.1">
    <property type="nucleotide sequence ID" value="NC_006905.1"/>
</dbReference>
<dbReference type="SMR" id="Q57GQ5"/>
<dbReference type="KEGG" id="sec:SCH_4201"/>
<dbReference type="HOGENOM" id="CLU_014657_3_0_6"/>
<dbReference type="Proteomes" id="UP000000538">
    <property type="component" value="Chromosome"/>
</dbReference>
<dbReference type="GO" id="GO:0005886">
    <property type="term" value="C:plasma membrane"/>
    <property type="evidence" value="ECO:0007669"/>
    <property type="project" value="UniProtKB-SubCell"/>
</dbReference>
<dbReference type="GO" id="GO:0009055">
    <property type="term" value="F:electron transfer activity"/>
    <property type="evidence" value="ECO:0007669"/>
    <property type="project" value="UniProtKB-UniRule"/>
</dbReference>
<dbReference type="GO" id="GO:0047134">
    <property type="term" value="F:protein-disulfide reductase [NAD(P)H] activity"/>
    <property type="evidence" value="ECO:0007669"/>
    <property type="project" value="UniProtKB-UniRule"/>
</dbReference>
<dbReference type="GO" id="GO:0045454">
    <property type="term" value="P:cell redox homeostasis"/>
    <property type="evidence" value="ECO:0007669"/>
    <property type="project" value="TreeGrafter"/>
</dbReference>
<dbReference type="GO" id="GO:0017004">
    <property type="term" value="P:cytochrome complex assembly"/>
    <property type="evidence" value="ECO:0007669"/>
    <property type="project" value="UniProtKB-UniRule"/>
</dbReference>
<dbReference type="CDD" id="cd02953">
    <property type="entry name" value="DsbDgamma"/>
    <property type="match status" value="1"/>
</dbReference>
<dbReference type="FunFam" id="2.60.40.1250:FF:000001">
    <property type="entry name" value="Thiol:disulfide interchange protein DsbD"/>
    <property type="match status" value="1"/>
</dbReference>
<dbReference type="FunFam" id="3.40.30.10:FF:000116">
    <property type="entry name" value="Thiol:disulfide interchange protein DsbD"/>
    <property type="match status" value="1"/>
</dbReference>
<dbReference type="Gene3D" id="3.40.30.10">
    <property type="entry name" value="Glutaredoxin"/>
    <property type="match status" value="1"/>
</dbReference>
<dbReference type="Gene3D" id="2.60.40.1250">
    <property type="entry name" value="Thiol:disulfide interchange protein DsbD, N-terminal domain"/>
    <property type="match status" value="1"/>
</dbReference>
<dbReference type="HAMAP" id="MF_00399">
    <property type="entry name" value="DbsD"/>
    <property type="match status" value="1"/>
</dbReference>
<dbReference type="InterPro" id="IPR003834">
    <property type="entry name" value="Cyt_c_assmbl_TM_dom"/>
</dbReference>
<dbReference type="InterPro" id="IPR035671">
    <property type="entry name" value="DsbD_gamma"/>
</dbReference>
<dbReference type="InterPro" id="IPR028250">
    <property type="entry name" value="DsbDN"/>
</dbReference>
<dbReference type="InterPro" id="IPR036929">
    <property type="entry name" value="DsbDN_sf"/>
</dbReference>
<dbReference type="InterPro" id="IPR022910">
    <property type="entry name" value="Thiol_diS_interchange_DbsD"/>
</dbReference>
<dbReference type="InterPro" id="IPR012336">
    <property type="entry name" value="Thioredoxin-like_fold"/>
</dbReference>
<dbReference type="InterPro" id="IPR036249">
    <property type="entry name" value="Thioredoxin-like_sf"/>
</dbReference>
<dbReference type="InterPro" id="IPR017937">
    <property type="entry name" value="Thioredoxin_CS"/>
</dbReference>
<dbReference type="InterPro" id="IPR013766">
    <property type="entry name" value="Thioredoxin_domain"/>
</dbReference>
<dbReference type="NCBIfam" id="NF001419">
    <property type="entry name" value="PRK00293.1"/>
    <property type="match status" value="1"/>
</dbReference>
<dbReference type="PANTHER" id="PTHR32234">
    <property type="entry name" value="THIOL:DISULFIDE INTERCHANGE PROTEIN DSBD"/>
    <property type="match status" value="1"/>
</dbReference>
<dbReference type="PANTHER" id="PTHR32234:SF0">
    <property type="entry name" value="THIOL:DISULFIDE INTERCHANGE PROTEIN DSBD"/>
    <property type="match status" value="1"/>
</dbReference>
<dbReference type="Pfam" id="PF11412">
    <property type="entry name" value="DsbD_N"/>
    <property type="match status" value="1"/>
</dbReference>
<dbReference type="Pfam" id="PF02683">
    <property type="entry name" value="DsbD_TM"/>
    <property type="match status" value="1"/>
</dbReference>
<dbReference type="Pfam" id="PF13098">
    <property type="entry name" value="Thioredoxin_2"/>
    <property type="match status" value="1"/>
</dbReference>
<dbReference type="SUPFAM" id="SSF74863">
    <property type="entry name" value="Thiol:disulfide interchange protein DsbD, N-terminal domain (DsbD-alpha)"/>
    <property type="match status" value="1"/>
</dbReference>
<dbReference type="SUPFAM" id="SSF52833">
    <property type="entry name" value="Thioredoxin-like"/>
    <property type="match status" value="1"/>
</dbReference>
<dbReference type="PROSITE" id="PS00194">
    <property type="entry name" value="THIOREDOXIN_1"/>
    <property type="match status" value="1"/>
</dbReference>
<dbReference type="PROSITE" id="PS51352">
    <property type="entry name" value="THIOREDOXIN_2"/>
    <property type="match status" value="1"/>
</dbReference>
<name>DSBD_SALCH</name>
<proteinExistence type="inferred from homology"/>
<sequence length="567" mass="61142">MAQRIFTLILLLCSTSAFAGLFDAPGRSQFVPADRAFVFDFQQNQHDLTLSWQVKEGYYLYRKQISITPTKADIAAVQLPAGVWHEDEFYGKSEIYRKRLNVPVTVNQAAAGATLTVTYQGCADAGFCYPPETKTVPLSEVAAAIDATPTPAVTQTGETSKPAAQLPFSALWALLIGIGIAFTPCVLPMYPLISGIVLGGRQRLSTGRALLLAFIYVQGMALTYTALGLVAAAAGLQFQAALQHPYVLIGLAIVFTLLALSMFGLFTLQLPSSLQTRLTLMSNRQQGGSPGGVFVMGAIAGLICSPCTTAPLSAILLYIAQSGNMWLGGGTLYLYALGMGLPLMLVTVFGNRLLPKSGPWMAHVKTAFGFVILALPVFLLERIIGEAWGLRLWSLLGVAFFGWAFITSLQARRAGMRIVQIILLAAALISVRPLQDWAFGSPSAQAPAHLNFTAISTVDELNQALAQAKGNPVMLDFYADWCVACKEFEKYTFSDPRVQQALGDTVLLQANVTANNAQDVALLKHLQVLGLPTILFFDAQGQEQPQARVTGFMDAATFSAHLHDRQP</sequence>
<accession>Q57GQ5</accession>
<feature type="signal peptide" evidence="1">
    <location>
        <begin position="1"/>
        <end position="19"/>
    </location>
</feature>
<feature type="chain" id="PRO_0000304394" description="Thiol:disulfide interchange protein DsbD">
    <location>
        <begin position="20"/>
        <end position="567"/>
    </location>
</feature>
<feature type="transmembrane region" description="Helical" evidence="1">
    <location>
        <begin position="166"/>
        <end position="186"/>
    </location>
</feature>
<feature type="transmembrane region" description="Helical" evidence="1">
    <location>
        <begin position="210"/>
        <end position="230"/>
    </location>
</feature>
<feature type="transmembrane region" description="Helical" evidence="1">
    <location>
        <begin position="246"/>
        <end position="266"/>
    </location>
</feature>
<feature type="transmembrane region" description="Helical" evidence="1">
    <location>
        <begin position="299"/>
        <end position="319"/>
    </location>
</feature>
<feature type="transmembrane region" description="Helical" evidence="1">
    <location>
        <begin position="326"/>
        <end position="346"/>
    </location>
</feature>
<feature type="transmembrane region" description="Helical" evidence="1">
    <location>
        <begin position="360"/>
        <end position="380"/>
    </location>
</feature>
<feature type="transmembrane region" description="Helical" evidence="1">
    <location>
        <begin position="387"/>
        <end position="407"/>
    </location>
</feature>
<feature type="transmembrane region" description="Helical" evidence="1">
    <location>
        <begin position="418"/>
        <end position="438"/>
    </location>
</feature>
<feature type="domain" description="Thioredoxin" evidence="1">
    <location>
        <begin position="435"/>
        <end position="567"/>
    </location>
</feature>
<feature type="disulfide bond" description="Redox-active" evidence="1">
    <location>
        <begin position="122"/>
        <end position="128"/>
    </location>
</feature>
<feature type="disulfide bond" description="Redox-active" evidence="1">
    <location>
        <begin position="185"/>
        <end position="307"/>
    </location>
</feature>
<feature type="disulfide bond" description="Redox-active" evidence="1">
    <location>
        <begin position="482"/>
        <end position="485"/>
    </location>
</feature>
<protein>
    <recommendedName>
        <fullName evidence="1">Thiol:disulfide interchange protein DsbD</fullName>
        <ecNumber evidence="1">1.8.1.8</ecNumber>
    </recommendedName>
    <alternativeName>
        <fullName evidence="1">Protein-disulfide reductase</fullName>
        <shortName evidence="1">Disulfide reductase</shortName>
    </alternativeName>
</protein>
<keyword id="KW-0997">Cell inner membrane</keyword>
<keyword id="KW-1003">Cell membrane</keyword>
<keyword id="KW-0201">Cytochrome c-type biogenesis</keyword>
<keyword id="KW-1015">Disulfide bond</keyword>
<keyword id="KW-0249">Electron transport</keyword>
<keyword id="KW-0472">Membrane</keyword>
<keyword id="KW-0520">NAD</keyword>
<keyword id="KW-0560">Oxidoreductase</keyword>
<keyword id="KW-0676">Redox-active center</keyword>
<keyword id="KW-0732">Signal</keyword>
<keyword id="KW-0812">Transmembrane</keyword>
<keyword id="KW-1133">Transmembrane helix</keyword>
<keyword id="KW-0813">Transport</keyword>
<gene>
    <name evidence="1" type="primary">dsbD</name>
    <name type="ordered locus">SCH_4201</name>
</gene>
<organism>
    <name type="scientific">Salmonella choleraesuis (strain SC-B67)</name>
    <dbReference type="NCBI Taxonomy" id="321314"/>
    <lineage>
        <taxon>Bacteria</taxon>
        <taxon>Pseudomonadati</taxon>
        <taxon>Pseudomonadota</taxon>
        <taxon>Gammaproteobacteria</taxon>
        <taxon>Enterobacterales</taxon>
        <taxon>Enterobacteriaceae</taxon>
        <taxon>Salmonella</taxon>
    </lineage>
</organism>